<dbReference type="EC" id="4.2.1.11" evidence="1"/>
<dbReference type="EMBL" id="CP000362">
    <property type="protein sequence ID" value="ABG32650.1"/>
    <property type="molecule type" value="Genomic_DNA"/>
</dbReference>
<dbReference type="RefSeq" id="WP_011569266.1">
    <property type="nucleotide sequence ID" value="NC_008209.1"/>
</dbReference>
<dbReference type="SMR" id="Q164E3"/>
<dbReference type="STRING" id="375451.RD1_3142"/>
<dbReference type="KEGG" id="rde:RD1_3142"/>
<dbReference type="eggNOG" id="COG0148">
    <property type="taxonomic scope" value="Bacteria"/>
</dbReference>
<dbReference type="HOGENOM" id="CLU_031223_2_1_5"/>
<dbReference type="OrthoDB" id="9804716at2"/>
<dbReference type="UniPathway" id="UPA00109">
    <property type="reaction ID" value="UER00187"/>
</dbReference>
<dbReference type="Proteomes" id="UP000007029">
    <property type="component" value="Chromosome"/>
</dbReference>
<dbReference type="GO" id="GO:0009986">
    <property type="term" value="C:cell surface"/>
    <property type="evidence" value="ECO:0007669"/>
    <property type="project" value="UniProtKB-SubCell"/>
</dbReference>
<dbReference type="GO" id="GO:0005576">
    <property type="term" value="C:extracellular region"/>
    <property type="evidence" value="ECO:0007669"/>
    <property type="project" value="UniProtKB-SubCell"/>
</dbReference>
<dbReference type="GO" id="GO:0000015">
    <property type="term" value="C:phosphopyruvate hydratase complex"/>
    <property type="evidence" value="ECO:0007669"/>
    <property type="project" value="InterPro"/>
</dbReference>
<dbReference type="GO" id="GO:0000287">
    <property type="term" value="F:magnesium ion binding"/>
    <property type="evidence" value="ECO:0007669"/>
    <property type="project" value="UniProtKB-UniRule"/>
</dbReference>
<dbReference type="GO" id="GO:0004634">
    <property type="term" value="F:phosphopyruvate hydratase activity"/>
    <property type="evidence" value="ECO:0007669"/>
    <property type="project" value="UniProtKB-UniRule"/>
</dbReference>
<dbReference type="GO" id="GO:0006096">
    <property type="term" value="P:glycolytic process"/>
    <property type="evidence" value="ECO:0007669"/>
    <property type="project" value="UniProtKB-UniRule"/>
</dbReference>
<dbReference type="CDD" id="cd03313">
    <property type="entry name" value="enolase"/>
    <property type="match status" value="1"/>
</dbReference>
<dbReference type="FunFam" id="3.20.20.120:FF:000001">
    <property type="entry name" value="Enolase"/>
    <property type="match status" value="1"/>
</dbReference>
<dbReference type="FunFam" id="3.30.390.10:FF:000001">
    <property type="entry name" value="Enolase"/>
    <property type="match status" value="1"/>
</dbReference>
<dbReference type="Gene3D" id="3.20.20.120">
    <property type="entry name" value="Enolase-like C-terminal domain"/>
    <property type="match status" value="1"/>
</dbReference>
<dbReference type="Gene3D" id="3.30.390.10">
    <property type="entry name" value="Enolase-like, N-terminal domain"/>
    <property type="match status" value="1"/>
</dbReference>
<dbReference type="HAMAP" id="MF_00318">
    <property type="entry name" value="Enolase"/>
    <property type="match status" value="1"/>
</dbReference>
<dbReference type="InterPro" id="IPR000941">
    <property type="entry name" value="Enolase"/>
</dbReference>
<dbReference type="InterPro" id="IPR036849">
    <property type="entry name" value="Enolase-like_C_sf"/>
</dbReference>
<dbReference type="InterPro" id="IPR029017">
    <property type="entry name" value="Enolase-like_N"/>
</dbReference>
<dbReference type="InterPro" id="IPR020810">
    <property type="entry name" value="Enolase_C"/>
</dbReference>
<dbReference type="InterPro" id="IPR020809">
    <property type="entry name" value="Enolase_CS"/>
</dbReference>
<dbReference type="InterPro" id="IPR020811">
    <property type="entry name" value="Enolase_N"/>
</dbReference>
<dbReference type="NCBIfam" id="TIGR01060">
    <property type="entry name" value="eno"/>
    <property type="match status" value="1"/>
</dbReference>
<dbReference type="PANTHER" id="PTHR11902">
    <property type="entry name" value="ENOLASE"/>
    <property type="match status" value="1"/>
</dbReference>
<dbReference type="PANTHER" id="PTHR11902:SF1">
    <property type="entry name" value="ENOLASE"/>
    <property type="match status" value="1"/>
</dbReference>
<dbReference type="Pfam" id="PF00113">
    <property type="entry name" value="Enolase_C"/>
    <property type="match status" value="1"/>
</dbReference>
<dbReference type="Pfam" id="PF03952">
    <property type="entry name" value="Enolase_N"/>
    <property type="match status" value="1"/>
</dbReference>
<dbReference type="PIRSF" id="PIRSF001400">
    <property type="entry name" value="Enolase"/>
    <property type="match status" value="1"/>
</dbReference>
<dbReference type="PRINTS" id="PR00148">
    <property type="entry name" value="ENOLASE"/>
</dbReference>
<dbReference type="SFLD" id="SFLDS00001">
    <property type="entry name" value="Enolase"/>
    <property type="match status" value="1"/>
</dbReference>
<dbReference type="SFLD" id="SFLDF00002">
    <property type="entry name" value="enolase"/>
    <property type="match status" value="1"/>
</dbReference>
<dbReference type="SMART" id="SM01192">
    <property type="entry name" value="Enolase_C"/>
    <property type="match status" value="1"/>
</dbReference>
<dbReference type="SMART" id="SM01193">
    <property type="entry name" value="Enolase_N"/>
    <property type="match status" value="1"/>
</dbReference>
<dbReference type="SUPFAM" id="SSF51604">
    <property type="entry name" value="Enolase C-terminal domain-like"/>
    <property type="match status" value="1"/>
</dbReference>
<dbReference type="SUPFAM" id="SSF54826">
    <property type="entry name" value="Enolase N-terminal domain-like"/>
    <property type="match status" value="1"/>
</dbReference>
<dbReference type="PROSITE" id="PS00164">
    <property type="entry name" value="ENOLASE"/>
    <property type="match status" value="1"/>
</dbReference>
<name>ENO_ROSDO</name>
<feature type="chain" id="PRO_0000267095" description="Enolase">
    <location>
        <begin position="1"/>
        <end position="424"/>
    </location>
</feature>
<feature type="active site" description="Proton donor" evidence="1">
    <location>
        <position position="205"/>
    </location>
</feature>
<feature type="active site" description="Proton acceptor" evidence="1">
    <location>
        <position position="337"/>
    </location>
</feature>
<feature type="binding site" evidence="1">
    <location>
        <position position="163"/>
    </location>
    <ligand>
        <name>(2R)-2-phosphoglycerate</name>
        <dbReference type="ChEBI" id="CHEBI:58289"/>
    </ligand>
</feature>
<feature type="binding site" evidence="1">
    <location>
        <position position="242"/>
    </location>
    <ligand>
        <name>Mg(2+)</name>
        <dbReference type="ChEBI" id="CHEBI:18420"/>
    </ligand>
</feature>
<feature type="binding site" evidence="1">
    <location>
        <position position="285"/>
    </location>
    <ligand>
        <name>Mg(2+)</name>
        <dbReference type="ChEBI" id="CHEBI:18420"/>
    </ligand>
</feature>
<feature type="binding site" evidence="1">
    <location>
        <position position="312"/>
    </location>
    <ligand>
        <name>Mg(2+)</name>
        <dbReference type="ChEBI" id="CHEBI:18420"/>
    </ligand>
</feature>
<feature type="binding site" evidence="1">
    <location>
        <position position="337"/>
    </location>
    <ligand>
        <name>(2R)-2-phosphoglycerate</name>
        <dbReference type="ChEBI" id="CHEBI:58289"/>
    </ligand>
</feature>
<feature type="binding site" evidence="1">
    <location>
        <position position="366"/>
    </location>
    <ligand>
        <name>(2R)-2-phosphoglycerate</name>
        <dbReference type="ChEBI" id="CHEBI:58289"/>
    </ligand>
</feature>
<feature type="binding site" evidence="1">
    <location>
        <position position="367"/>
    </location>
    <ligand>
        <name>(2R)-2-phosphoglycerate</name>
        <dbReference type="ChEBI" id="CHEBI:58289"/>
    </ligand>
</feature>
<feature type="binding site" evidence="1">
    <location>
        <position position="388"/>
    </location>
    <ligand>
        <name>(2R)-2-phosphoglycerate</name>
        <dbReference type="ChEBI" id="CHEBI:58289"/>
    </ligand>
</feature>
<sequence>MSTIIDIHAREILDSRGNPTVEVDVILEDGTMGRAAVPSGASTGAYEAVERRDGDKTRYMGKGVLEACAAVNGEIADALVGLDATEQVDIDASMIELDGTANKSRLGANAILGVSLAAAKAAADYCTQPLYRYVGGTSARVLPVPMMNIINGGEHADNPIDIQEFMIMPVAADNIRDAVRMGSEVFHTLKKELSAAGLSTGIGDEGGFAPNINSTRDALDFILKSIEKAGYKPGEEIYLALDCAATEYFKNGKYELSGEGKSLTSEENVAYLAALVADYPIISIEDAMSEDDWDGWKALTDALGHKVQLVGDDLFVTNPERLATGIERGSANSMLVKVNQIGTLTETLKAVDMAHRAGFTNVMSHRSGETEDATIADLAVATNCGQIKTGSLARSDRLAKYNQLIRIEEALGETAEYAGRSILR</sequence>
<gene>
    <name evidence="1" type="primary">eno</name>
    <name type="ordered locus">RD1_3142</name>
</gene>
<protein>
    <recommendedName>
        <fullName evidence="1">Enolase</fullName>
        <ecNumber evidence="1">4.2.1.11</ecNumber>
    </recommendedName>
    <alternativeName>
        <fullName evidence="1">2-phospho-D-glycerate hydro-lyase</fullName>
    </alternativeName>
    <alternativeName>
        <fullName evidence="1">2-phosphoglycerate dehydratase</fullName>
    </alternativeName>
</protein>
<evidence type="ECO:0000255" key="1">
    <source>
        <dbReference type="HAMAP-Rule" id="MF_00318"/>
    </source>
</evidence>
<organism>
    <name type="scientific">Roseobacter denitrificans (strain ATCC 33942 / OCh 114)</name>
    <name type="common">Erythrobacter sp. (strain OCh 114)</name>
    <name type="synonym">Roseobacter denitrificans</name>
    <dbReference type="NCBI Taxonomy" id="375451"/>
    <lineage>
        <taxon>Bacteria</taxon>
        <taxon>Pseudomonadati</taxon>
        <taxon>Pseudomonadota</taxon>
        <taxon>Alphaproteobacteria</taxon>
        <taxon>Rhodobacterales</taxon>
        <taxon>Roseobacteraceae</taxon>
        <taxon>Roseobacter</taxon>
    </lineage>
</organism>
<accession>Q164E3</accession>
<comment type="function">
    <text evidence="1">Catalyzes the reversible conversion of 2-phosphoglycerate (2-PG) into phosphoenolpyruvate (PEP). It is essential for the degradation of carbohydrates via glycolysis.</text>
</comment>
<comment type="catalytic activity">
    <reaction evidence="1">
        <text>(2R)-2-phosphoglycerate = phosphoenolpyruvate + H2O</text>
        <dbReference type="Rhea" id="RHEA:10164"/>
        <dbReference type="ChEBI" id="CHEBI:15377"/>
        <dbReference type="ChEBI" id="CHEBI:58289"/>
        <dbReference type="ChEBI" id="CHEBI:58702"/>
        <dbReference type="EC" id="4.2.1.11"/>
    </reaction>
</comment>
<comment type="cofactor">
    <cofactor evidence="1">
        <name>Mg(2+)</name>
        <dbReference type="ChEBI" id="CHEBI:18420"/>
    </cofactor>
    <text evidence="1">Binds a second Mg(2+) ion via substrate during catalysis.</text>
</comment>
<comment type="pathway">
    <text evidence="1">Carbohydrate degradation; glycolysis; pyruvate from D-glyceraldehyde 3-phosphate: step 4/5.</text>
</comment>
<comment type="subcellular location">
    <subcellularLocation>
        <location evidence="1">Cytoplasm</location>
    </subcellularLocation>
    <subcellularLocation>
        <location evidence="1">Secreted</location>
    </subcellularLocation>
    <subcellularLocation>
        <location evidence="1">Cell surface</location>
    </subcellularLocation>
    <text evidence="1">Fractions of enolase are present in both the cytoplasm and on the cell surface.</text>
</comment>
<comment type="similarity">
    <text evidence="1">Belongs to the enolase family.</text>
</comment>
<keyword id="KW-0963">Cytoplasm</keyword>
<keyword id="KW-0324">Glycolysis</keyword>
<keyword id="KW-0456">Lyase</keyword>
<keyword id="KW-0460">Magnesium</keyword>
<keyword id="KW-0479">Metal-binding</keyword>
<keyword id="KW-1185">Reference proteome</keyword>
<keyword id="KW-0964">Secreted</keyword>
<proteinExistence type="inferred from homology"/>
<reference key="1">
    <citation type="journal article" date="2007" name="J. Bacteriol.">
        <title>The complete genome sequence of Roseobacter denitrificans reveals a mixotrophic rather than photosynthetic metabolism.</title>
        <authorList>
            <person name="Swingley W.D."/>
            <person name="Sadekar S."/>
            <person name="Mastrian S.D."/>
            <person name="Matthies H.J."/>
            <person name="Hao J."/>
            <person name="Ramos H."/>
            <person name="Acharya C.R."/>
            <person name="Conrad A.L."/>
            <person name="Taylor H.L."/>
            <person name="Dejesa L.C."/>
            <person name="Shah M.K."/>
            <person name="O'Huallachain M.E."/>
            <person name="Lince M.T."/>
            <person name="Blankenship R.E."/>
            <person name="Beatty J.T."/>
            <person name="Touchman J.W."/>
        </authorList>
    </citation>
    <scope>NUCLEOTIDE SEQUENCE [LARGE SCALE GENOMIC DNA]</scope>
    <source>
        <strain>ATCC 33942 / OCh 114</strain>
    </source>
</reference>